<gene>
    <name evidence="1" type="primary">mcsB</name>
    <name type="ordered locus">STH3134</name>
</gene>
<dbReference type="EC" id="2.7.14.1" evidence="1"/>
<dbReference type="EMBL" id="AP006840">
    <property type="protein sequence ID" value="BAD42116.1"/>
    <property type="molecule type" value="Genomic_DNA"/>
</dbReference>
<dbReference type="RefSeq" id="WP_011197247.1">
    <property type="nucleotide sequence ID" value="NC_006177.1"/>
</dbReference>
<dbReference type="SMR" id="Q67JN4"/>
<dbReference type="STRING" id="292459.STH3134"/>
<dbReference type="KEGG" id="sth:STH3134"/>
<dbReference type="eggNOG" id="COG3869">
    <property type="taxonomic scope" value="Bacteria"/>
</dbReference>
<dbReference type="HOGENOM" id="CLU_066591_1_0_9"/>
<dbReference type="OrthoDB" id="9791353at2"/>
<dbReference type="Proteomes" id="UP000000417">
    <property type="component" value="Chromosome"/>
</dbReference>
<dbReference type="GO" id="GO:0005615">
    <property type="term" value="C:extracellular space"/>
    <property type="evidence" value="ECO:0007669"/>
    <property type="project" value="TreeGrafter"/>
</dbReference>
<dbReference type="GO" id="GO:0005524">
    <property type="term" value="F:ATP binding"/>
    <property type="evidence" value="ECO:0007669"/>
    <property type="project" value="UniProtKB-KW"/>
</dbReference>
<dbReference type="GO" id="GO:0004111">
    <property type="term" value="F:creatine kinase activity"/>
    <property type="evidence" value="ECO:0007669"/>
    <property type="project" value="InterPro"/>
</dbReference>
<dbReference type="GO" id="GO:0004672">
    <property type="term" value="F:protein kinase activity"/>
    <property type="evidence" value="ECO:0007669"/>
    <property type="project" value="UniProtKB-UniRule"/>
</dbReference>
<dbReference type="GO" id="GO:0046314">
    <property type="term" value="P:phosphocreatine biosynthetic process"/>
    <property type="evidence" value="ECO:0007669"/>
    <property type="project" value="InterPro"/>
</dbReference>
<dbReference type="CDD" id="cd07930">
    <property type="entry name" value="bacterial_phosphagen_kinase"/>
    <property type="match status" value="1"/>
</dbReference>
<dbReference type="Gene3D" id="3.30.590.10">
    <property type="entry name" value="Glutamine synthetase/guanido kinase, catalytic domain"/>
    <property type="match status" value="1"/>
</dbReference>
<dbReference type="HAMAP" id="MF_00602">
    <property type="entry name" value="Prot_Arg_kinase"/>
    <property type="match status" value="1"/>
</dbReference>
<dbReference type="InterPro" id="IPR023660">
    <property type="entry name" value="Arg_Kinase"/>
</dbReference>
<dbReference type="InterPro" id="IPR000749">
    <property type="entry name" value="ATP-guanido_PTrfase"/>
</dbReference>
<dbReference type="InterPro" id="IPR022415">
    <property type="entry name" value="ATP-guanido_PTrfase_AS"/>
</dbReference>
<dbReference type="InterPro" id="IPR022414">
    <property type="entry name" value="ATP-guanido_PTrfase_cat"/>
</dbReference>
<dbReference type="InterPro" id="IPR014746">
    <property type="entry name" value="Gln_synth/guanido_kin_cat_dom"/>
</dbReference>
<dbReference type="NCBIfam" id="NF002194">
    <property type="entry name" value="PRK01059.1-4"/>
    <property type="match status" value="1"/>
</dbReference>
<dbReference type="PANTHER" id="PTHR11547:SF38">
    <property type="entry name" value="ARGININE KINASE 1-RELATED"/>
    <property type="match status" value="1"/>
</dbReference>
<dbReference type="PANTHER" id="PTHR11547">
    <property type="entry name" value="ARGININE OR CREATINE KINASE"/>
    <property type="match status" value="1"/>
</dbReference>
<dbReference type="Pfam" id="PF00217">
    <property type="entry name" value="ATP-gua_Ptrans"/>
    <property type="match status" value="1"/>
</dbReference>
<dbReference type="SUPFAM" id="SSF55931">
    <property type="entry name" value="Glutamine synthetase/guanido kinase"/>
    <property type="match status" value="1"/>
</dbReference>
<dbReference type="PROSITE" id="PS00112">
    <property type="entry name" value="PHOSPHAGEN_KINASE"/>
    <property type="match status" value="1"/>
</dbReference>
<dbReference type="PROSITE" id="PS51510">
    <property type="entry name" value="PHOSPHAGEN_KINASE_C"/>
    <property type="match status" value="1"/>
</dbReference>
<protein>
    <recommendedName>
        <fullName evidence="1">Protein-arginine kinase</fullName>
        <ecNumber evidence="1">2.7.14.1</ecNumber>
    </recommendedName>
</protein>
<proteinExistence type="inferred from homology"/>
<evidence type="ECO:0000255" key="1">
    <source>
        <dbReference type="HAMAP-Rule" id="MF_00602"/>
    </source>
</evidence>
<reference key="1">
    <citation type="journal article" date="2004" name="Nucleic Acids Res.">
        <title>Genome sequence of Symbiobacterium thermophilum, an uncultivable bacterium that depends on microbial commensalism.</title>
        <authorList>
            <person name="Ueda K."/>
            <person name="Yamashita A."/>
            <person name="Ishikawa J."/>
            <person name="Shimada M."/>
            <person name="Watsuji T."/>
            <person name="Morimura K."/>
            <person name="Ikeda H."/>
            <person name="Hattori M."/>
            <person name="Beppu T."/>
        </authorList>
    </citation>
    <scope>NUCLEOTIDE SEQUENCE [LARGE SCALE GENOMIC DNA]</scope>
    <source>
        <strain>DSM 24528 / JCM 14929 / IAM 14863 / T</strain>
    </source>
</reference>
<feature type="chain" id="PRO_0000212038" description="Protein-arginine kinase">
    <location>
        <begin position="1"/>
        <end position="353"/>
    </location>
</feature>
<feature type="domain" description="Phosphagen kinase C-terminal" evidence="1">
    <location>
        <begin position="24"/>
        <end position="256"/>
    </location>
</feature>
<feature type="short sequence motif" description="RDXXRA motif of the pArg binding pocket involved in allosteric regulation" evidence="1">
    <location>
        <begin position="339"/>
        <end position="344"/>
    </location>
</feature>
<feature type="binding site" evidence="1">
    <location>
        <begin position="27"/>
        <end position="31"/>
    </location>
    <ligand>
        <name>ATP</name>
        <dbReference type="ChEBI" id="CHEBI:30616"/>
    </ligand>
</feature>
<feature type="binding site" evidence="1">
    <location>
        <position position="93"/>
    </location>
    <ligand>
        <name>ATP</name>
        <dbReference type="ChEBI" id="CHEBI:30616"/>
    </ligand>
</feature>
<feature type="binding site" evidence="1">
    <location>
        <position position="127"/>
    </location>
    <ligand>
        <name>ATP</name>
        <dbReference type="ChEBI" id="CHEBI:30616"/>
    </ligand>
</feature>
<feature type="binding site" evidence="1">
    <location>
        <begin position="178"/>
        <end position="182"/>
    </location>
    <ligand>
        <name>ATP</name>
        <dbReference type="ChEBI" id="CHEBI:30616"/>
    </ligand>
</feature>
<feature type="binding site" evidence="1">
    <location>
        <begin position="209"/>
        <end position="214"/>
    </location>
    <ligand>
        <name>ATP</name>
        <dbReference type="ChEBI" id="CHEBI:30616"/>
    </ligand>
</feature>
<keyword id="KW-0021">Allosteric enzyme</keyword>
<keyword id="KW-0067">ATP-binding</keyword>
<keyword id="KW-0418">Kinase</keyword>
<keyword id="KW-0547">Nucleotide-binding</keyword>
<keyword id="KW-1185">Reference proteome</keyword>
<keyword id="KW-0808">Transferase</keyword>
<sequence length="353" mass="39405">MGWNELVSRAESRWMEGTGPHADIVLSSRIRLARNLDDLPFPQRMSEPDTERLLQAAEAGVREINLVGFPSRVELYRLADTTPLDRQILVEKHLISPQQSKEVMAKAVAISEDEAISIMVNEEDHLRIQVLASGLQLQEAWRVASQVDDALEQRLQFAFDEQLGYLTACPTNVGTGLRASVMMHLPALVLTQQAGRLFHNLSQLGLVVRGLYGEGTEAAGQIFQISNQTSLGKAEEEIIANLEAIARTVIDTEEQARRHLYGEMRLQIEDRVSRAYGILTTARMISSEEAMRLLSDVRLGVALGVVPKIDYRILNELLVAMQPACLQRQAGRELNPLERDVRRAALIRARLSA</sequence>
<accession>Q67JN4</accession>
<comment type="function">
    <text evidence="1">Catalyzes the specific phosphorylation of arginine residues in proteins.</text>
</comment>
<comment type="catalytic activity">
    <reaction evidence="1">
        <text>L-arginyl-[protein] + ATP = N(omega)-phospho-L-arginyl-[protein] + ADP + H(+)</text>
        <dbReference type="Rhea" id="RHEA:43384"/>
        <dbReference type="Rhea" id="RHEA-COMP:10532"/>
        <dbReference type="Rhea" id="RHEA-COMP:10533"/>
        <dbReference type="ChEBI" id="CHEBI:15378"/>
        <dbReference type="ChEBI" id="CHEBI:29965"/>
        <dbReference type="ChEBI" id="CHEBI:30616"/>
        <dbReference type="ChEBI" id="CHEBI:83226"/>
        <dbReference type="ChEBI" id="CHEBI:456216"/>
        <dbReference type="EC" id="2.7.14.1"/>
    </reaction>
</comment>
<comment type="activity regulation">
    <text evidence="1">Appears to be allosterically activated by the binding of pArg-containing polypeptides to the pArg-binding pocket localized in the C-terminal domain of McsB.</text>
</comment>
<comment type="similarity">
    <text evidence="1">Belongs to the ATP:guanido phosphotransferase family.</text>
</comment>
<organism>
    <name type="scientific">Symbiobacterium thermophilum (strain DSM 24528 / JCM 14929 / IAM 14863 / T)</name>
    <dbReference type="NCBI Taxonomy" id="292459"/>
    <lineage>
        <taxon>Bacteria</taxon>
        <taxon>Bacillati</taxon>
        <taxon>Bacillota</taxon>
        <taxon>Clostridia</taxon>
        <taxon>Eubacteriales</taxon>
        <taxon>Symbiobacteriaceae</taxon>
        <taxon>Symbiobacterium</taxon>
    </lineage>
</organism>
<name>MCSB_SYMTH</name>